<proteinExistence type="inferred from homology"/>
<reference key="1">
    <citation type="submission" date="2007-03" db="EMBL/GenBank/DDBJ databases">
        <title>Complete sequence of Shewanella loihica PV-4.</title>
        <authorList>
            <consortium name="US DOE Joint Genome Institute"/>
            <person name="Copeland A."/>
            <person name="Lucas S."/>
            <person name="Lapidus A."/>
            <person name="Barry K."/>
            <person name="Detter J.C."/>
            <person name="Glavina del Rio T."/>
            <person name="Hammon N."/>
            <person name="Israni S."/>
            <person name="Dalin E."/>
            <person name="Tice H."/>
            <person name="Pitluck S."/>
            <person name="Chain P."/>
            <person name="Malfatti S."/>
            <person name="Shin M."/>
            <person name="Vergez L."/>
            <person name="Schmutz J."/>
            <person name="Larimer F."/>
            <person name="Land M."/>
            <person name="Hauser L."/>
            <person name="Kyrpides N."/>
            <person name="Mikhailova N."/>
            <person name="Romine M.F."/>
            <person name="Serres G."/>
            <person name="Fredrickson J."/>
            <person name="Tiedje J."/>
            <person name="Richardson P."/>
        </authorList>
    </citation>
    <scope>NUCLEOTIDE SEQUENCE [LARGE SCALE GENOMIC DNA]</scope>
    <source>
        <strain>ATCC BAA-1088 / PV-4</strain>
    </source>
</reference>
<accession>A3QF43</accession>
<dbReference type="EC" id="3.5.3.23" evidence="1"/>
<dbReference type="EMBL" id="CP000606">
    <property type="protein sequence ID" value="ABO24091.1"/>
    <property type="molecule type" value="Genomic_DNA"/>
</dbReference>
<dbReference type="RefSeq" id="WP_011866023.1">
    <property type="nucleotide sequence ID" value="NC_009092.1"/>
</dbReference>
<dbReference type="SMR" id="A3QF43"/>
<dbReference type="STRING" id="323850.Shew_2225"/>
<dbReference type="KEGG" id="slo:Shew_2225"/>
<dbReference type="eggNOG" id="COG3724">
    <property type="taxonomic scope" value="Bacteria"/>
</dbReference>
<dbReference type="HOGENOM" id="CLU_053835_0_0_6"/>
<dbReference type="OrthoDB" id="248552at2"/>
<dbReference type="UniPathway" id="UPA00185">
    <property type="reaction ID" value="UER00280"/>
</dbReference>
<dbReference type="Proteomes" id="UP000001558">
    <property type="component" value="Chromosome"/>
</dbReference>
<dbReference type="GO" id="GO:0009015">
    <property type="term" value="F:N-succinylarginine dihydrolase activity"/>
    <property type="evidence" value="ECO:0007669"/>
    <property type="project" value="UniProtKB-UniRule"/>
</dbReference>
<dbReference type="GO" id="GO:0019544">
    <property type="term" value="P:arginine catabolic process to glutamate"/>
    <property type="evidence" value="ECO:0007669"/>
    <property type="project" value="UniProtKB-UniRule"/>
</dbReference>
<dbReference type="GO" id="GO:0019545">
    <property type="term" value="P:arginine catabolic process to succinate"/>
    <property type="evidence" value="ECO:0007669"/>
    <property type="project" value="UniProtKB-UniRule"/>
</dbReference>
<dbReference type="Gene3D" id="3.75.10.20">
    <property type="entry name" value="Succinylarginine dihydrolase"/>
    <property type="match status" value="1"/>
</dbReference>
<dbReference type="HAMAP" id="MF_01172">
    <property type="entry name" value="AstB"/>
    <property type="match status" value="1"/>
</dbReference>
<dbReference type="InterPro" id="IPR037031">
    <property type="entry name" value="AstB_sf"/>
</dbReference>
<dbReference type="InterPro" id="IPR007079">
    <property type="entry name" value="SuccinylArg_d-Hdrlase_AstB"/>
</dbReference>
<dbReference type="NCBIfam" id="TIGR03241">
    <property type="entry name" value="arg_catab_astB"/>
    <property type="match status" value="1"/>
</dbReference>
<dbReference type="NCBIfam" id="NF009789">
    <property type="entry name" value="PRK13281.1"/>
    <property type="match status" value="1"/>
</dbReference>
<dbReference type="PANTHER" id="PTHR30420">
    <property type="entry name" value="N-SUCCINYLARGININE DIHYDROLASE"/>
    <property type="match status" value="1"/>
</dbReference>
<dbReference type="PANTHER" id="PTHR30420:SF2">
    <property type="entry name" value="N-SUCCINYLARGININE DIHYDROLASE"/>
    <property type="match status" value="1"/>
</dbReference>
<dbReference type="Pfam" id="PF04996">
    <property type="entry name" value="AstB"/>
    <property type="match status" value="1"/>
</dbReference>
<dbReference type="SUPFAM" id="SSF55909">
    <property type="entry name" value="Pentein"/>
    <property type="match status" value="1"/>
</dbReference>
<sequence length="445" mass="48933">MKHYEANFDGLVGPTHNYAGLSYGNVASLNNAAAISSPKAAAKQGLKKAKALADLGLAQGMLAPQERPDLHTLRRIGFSGTDAEVLNKAAKQAPALLRACCSASSMWTANAATVSPSADTHDGKIHFTPANLVDKLHRSIEPVTTGNILAATFNNSRYFHHHQHLPEHVSFGDEGAANHTRLCSEYGHAGIELFVYGQEATNPNAPKPKKYPARQTLEASQAIARLHQLDDESSVFIQQNPDVIDQGVFHNDVIAVGNQNVLFYHEQAFVDTQKKLAEIQDKFNGKELHFIEVPTAKVGIQDAVKSYLFNTQIVTLPNGEMAIIAPTNCQENEAVYAYLNELVTLGTPIKQVHYFDVKQSMQNGGGPACLRLRVAMNETELAAVNPNTLMNDELFNRLNLWVEKHYRDELAIDDLADPQLIVESRTALDELTQIMKLGSVYQFQK</sequence>
<evidence type="ECO:0000255" key="1">
    <source>
        <dbReference type="HAMAP-Rule" id="MF_01172"/>
    </source>
</evidence>
<feature type="chain" id="PRO_1000065738" description="N-succinylarginine dihydrolase">
    <location>
        <begin position="1"/>
        <end position="445"/>
    </location>
</feature>
<feature type="active site" evidence="1">
    <location>
        <position position="174"/>
    </location>
</feature>
<feature type="active site" evidence="1">
    <location>
        <position position="250"/>
    </location>
</feature>
<feature type="active site" description="Nucleophile" evidence="1">
    <location>
        <position position="369"/>
    </location>
</feature>
<feature type="binding site" evidence="1">
    <location>
        <begin position="19"/>
        <end position="28"/>
    </location>
    <ligand>
        <name>substrate</name>
    </ligand>
</feature>
<feature type="binding site" evidence="1">
    <location>
        <position position="110"/>
    </location>
    <ligand>
        <name>substrate</name>
    </ligand>
</feature>
<feature type="binding site" evidence="1">
    <location>
        <begin position="137"/>
        <end position="138"/>
    </location>
    <ligand>
        <name>substrate</name>
    </ligand>
</feature>
<feature type="binding site" evidence="1">
    <location>
        <position position="214"/>
    </location>
    <ligand>
        <name>substrate</name>
    </ligand>
</feature>
<feature type="binding site" evidence="1">
    <location>
        <position position="252"/>
    </location>
    <ligand>
        <name>substrate</name>
    </ligand>
</feature>
<feature type="binding site" evidence="1">
    <location>
        <position position="363"/>
    </location>
    <ligand>
        <name>substrate</name>
    </ligand>
</feature>
<name>ASTB_SHELP</name>
<organism>
    <name type="scientific">Shewanella loihica (strain ATCC BAA-1088 / PV-4)</name>
    <dbReference type="NCBI Taxonomy" id="323850"/>
    <lineage>
        <taxon>Bacteria</taxon>
        <taxon>Pseudomonadati</taxon>
        <taxon>Pseudomonadota</taxon>
        <taxon>Gammaproteobacteria</taxon>
        <taxon>Alteromonadales</taxon>
        <taxon>Shewanellaceae</taxon>
        <taxon>Shewanella</taxon>
    </lineage>
</organism>
<gene>
    <name evidence="1" type="primary">astB</name>
    <name type="ordered locus">Shew_2225</name>
</gene>
<protein>
    <recommendedName>
        <fullName evidence="1">N-succinylarginine dihydrolase</fullName>
        <ecNumber evidence="1">3.5.3.23</ecNumber>
    </recommendedName>
</protein>
<keyword id="KW-0056">Arginine metabolism</keyword>
<keyword id="KW-0378">Hydrolase</keyword>
<keyword id="KW-1185">Reference proteome</keyword>
<comment type="function">
    <text evidence="1">Catalyzes the hydrolysis of N(2)-succinylarginine into N(2)-succinylornithine, ammonia and CO(2).</text>
</comment>
<comment type="catalytic activity">
    <reaction evidence="1">
        <text>N(2)-succinyl-L-arginine + 2 H2O + 2 H(+) = N(2)-succinyl-L-ornithine + 2 NH4(+) + CO2</text>
        <dbReference type="Rhea" id="RHEA:19533"/>
        <dbReference type="ChEBI" id="CHEBI:15377"/>
        <dbReference type="ChEBI" id="CHEBI:15378"/>
        <dbReference type="ChEBI" id="CHEBI:16526"/>
        <dbReference type="ChEBI" id="CHEBI:28938"/>
        <dbReference type="ChEBI" id="CHEBI:58241"/>
        <dbReference type="ChEBI" id="CHEBI:58514"/>
        <dbReference type="EC" id="3.5.3.23"/>
    </reaction>
</comment>
<comment type="pathway">
    <text evidence="1">Amino-acid degradation; L-arginine degradation via AST pathway; L-glutamate and succinate from L-arginine: step 2/5.</text>
</comment>
<comment type="subunit">
    <text evidence="1">Homodimer.</text>
</comment>
<comment type="similarity">
    <text evidence="1">Belongs to the succinylarginine dihydrolase family.</text>
</comment>